<organism>
    <name type="scientific">Saccharomyces cerevisiae (strain ATCC 204508 / S288c)</name>
    <name type="common">Baker's yeast</name>
    <dbReference type="NCBI Taxonomy" id="559292"/>
    <lineage>
        <taxon>Eukaryota</taxon>
        <taxon>Fungi</taxon>
        <taxon>Dikarya</taxon>
        <taxon>Ascomycota</taxon>
        <taxon>Saccharomycotina</taxon>
        <taxon>Saccharomycetes</taxon>
        <taxon>Saccharomycetales</taxon>
        <taxon>Saccharomycetaceae</taxon>
        <taxon>Saccharomyces</taxon>
    </lineage>
</organism>
<feature type="chain" id="PRO_0000088815" description="Serine/threonine-protein kinase TOR2">
    <location>
        <begin position="1"/>
        <end position="2474"/>
    </location>
</feature>
<feature type="repeat" description="HEAT 1">
    <location>
        <begin position="588"/>
        <end position="626"/>
    </location>
</feature>
<feature type="repeat" description="HEAT 2">
    <location>
        <begin position="636"/>
        <end position="674"/>
    </location>
</feature>
<feature type="repeat" description="HEAT 3">
    <location>
        <begin position="676"/>
        <end position="710"/>
    </location>
</feature>
<feature type="repeat" description="HEAT 4">
    <location>
        <begin position="756"/>
        <end position="793"/>
    </location>
</feature>
<feature type="repeat" description="HEAT 5">
    <location>
        <begin position="797"/>
        <end position="835"/>
    </location>
</feature>
<feature type="repeat" description="HEAT 6">
    <location>
        <begin position="841"/>
        <end position="879"/>
    </location>
</feature>
<feature type="repeat" description="HEAT 7">
    <location>
        <begin position="917"/>
        <end position="955"/>
    </location>
</feature>
<feature type="repeat" description="HEAT 8">
    <location>
        <begin position="1039"/>
        <end position="1076"/>
    </location>
</feature>
<feature type="repeat" description="HEAT 9">
    <location>
        <begin position="1079"/>
        <end position="1116"/>
    </location>
</feature>
<feature type="repeat" description="HEAT 10">
    <location>
        <begin position="1118"/>
        <end position="1155"/>
    </location>
</feature>
<feature type="repeat" description="HEAT 11">
    <location>
        <begin position="1292"/>
        <end position="1331"/>
    </location>
</feature>
<feature type="domain" description="FAT" evidence="2">
    <location>
        <begin position="1338"/>
        <end position="1922"/>
    </location>
</feature>
<feature type="domain" description="PI3K/PI4K catalytic" evidence="1">
    <location>
        <begin position="2097"/>
        <end position="2421"/>
    </location>
</feature>
<feature type="domain" description="FATC" evidence="2 3">
    <location>
        <begin position="2442"/>
        <end position="2474"/>
    </location>
</feature>
<feature type="region of interest" description="Disordered" evidence="4">
    <location>
        <begin position="1"/>
        <end position="62"/>
    </location>
</feature>
<feature type="region of interest" description="G-loop" evidence="1">
    <location>
        <begin position="2103"/>
        <end position="2109"/>
    </location>
</feature>
<feature type="region of interest" description="Catalytic loop" evidence="1">
    <location>
        <begin position="2276"/>
        <end position="2284"/>
    </location>
</feature>
<feature type="region of interest" description="Activation loop" evidence="1">
    <location>
        <begin position="2296"/>
        <end position="2321"/>
    </location>
</feature>
<feature type="compositionally biased region" description="Basic residues" evidence="4">
    <location>
        <begin position="25"/>
        <end position="36"/>
    </location>
</feature>
<feature type="compositionally biased region" description="Polar residues" evidence="4">
    <location>
        <begin position="43"/>
        <end position="56"/>
    </location>
</feature>
<feature type="modified residue" description="Phosphothreonine" evidence="31">
    <location>
        <position position="10"/>
    </location>
</feature>
<feature type="mutagenesis site" description="In TOR2-1; confers resistance to rapamycin." evidence="25">
    <original>S</original>
    <variation>I</variation>
    <location>
        <position position="1975"/>
    </location>
</feature>
<feature type="mutagenesis site" description="Causes defect in receptor endocytosis." evidence="12">
    <original>G</original>
    <variation>R</variation>
    <location>
        <position position="2129"/>
    </location>
</feature>
<feature type="mutagenesis site" description="Loss of function." evidence="25">
    <original>D</original>
    <variation>A</variation>
    <location>
        <position position="2279"/>
    </location>
</feature>
<feature type="mutagenesis site" description="Loss of kinase activity." evidence="17">
    <original>D</original>
    <variation>E</variation>
    <location>
        <position position="2298"/>
    </location>
</feature>
<feature type="sequence conflict" description="In Ref. 2; CAA82048." evidence="29" ref="2">
    <location>
        <position position="1473"/>
    </location>
</feature>
<protein>
    <recommendedName>
        <fullName>Serine/threonine-protein kinase TOR2</fullName>
        <ecNumber>2.7.1.67</ecNumber>
        <ecNumber>2.7.11.1</ecNumber>
    </recommendedName>
    <alternativeName>
        <fullName>Dominant rapamycin resistance protein 2</fullName>
    </alternativeName>
    <alternativeName>
        <fullName>Phosphatidylinositol 4-kinase TOR2</fullName>
        <shortName>PI4-kinase TOR2</shortName>
        <shortName>PI4K TOR2</shortName>
        <shortName>PtdIns-4-kinase TOR2</shortName>
    </alternativeName>
    <alternativeName>
        <fullName>Target of rapamycin kinase 2</fullName>
    </alternativeName>
    <alternativeName>
        <fullName>Temperature-sensitive CSG2 suppressor protein 14</fullName>
    </alternativeName>
</protein>
<comment type="function">
    <text evidence="5 6 7 9 12 13 14 17 18 19 20 23 24 25 26 27 28">Phosphatidylinositol 3-kinase homolog, component of both TORC1 and TORC2. TORC1 regulates multiple cellular processes to control cell growth in response to environmental signals. Nutrient limitation and environmental stress signals cause inactivation of TORC1. Active TORC1 positively controls ribosome biogenesis via control of rRNA, ribosomal protein and tRNA gene expression, and rRNA processing. TORC1 positively controls protein biosynthesis by regulation of mRNA stability, translation initiation factor activity, and high-affinity amino acid permeases that serve to provide amino acids for use by the translation machinery. TORC1 also promotes growth by sequestering a number of nutrient and general stress-responsive transcription factors in the cytoplasm. TORC1 negatively controls macroautophagy, a process to recycle surplus cytoplasmic mass under nutrient starvation conditions. TORC1 controls many of these processes via TIP41-TAP42-mediated inhibition of the type 2A-related phosphatases PP2A and SIT4 (PubMed:10198052, PubMed:10329624, PubMed:10604478, PubMed:11741537, PubMed:15620355, PubMed:7606777, PubMed:8741837, PubMed:9539725, PubMed:9843498). In nutrient-rich conditions, responsible for the phosphorylation of AGC S6 kinase (S6K) YPK3, activating YPK3 kinase activity and promoting phosphorylation of ribosomal protein S6 (PubMed:25767889). Phosphorylates kinase SCH9 at 6 amino acids in the C-terminus, activating SCH9 kinase activity to properly regulate ribosome biogenesis, translation initiation, and entry into stationary phase (PubMed:17560372). TORC2 regulates cell cycle-dependent polarization of the actin-cytoskeleton, cell wall integrity, and receptor endocytosis. TORC2 controls polarity of the actin cytoskeleton, which is required for orienting the secretory pathway toward discrete growth sites, via the RHO1/PKC1/MAPK cell integrity pathway by activating the RHO1 guanine nucleotide exchange factor ROM2. TORC2 phosphorylates the AGC kinase YPK2, an upstream effector of the cell integrity pathway. TORC2 negatively regulates calcineurin-dependent stress signaling via phosphorylation of its effector SLM1-SLM2 (PubMed:14593073, PubMed:15372071, PubMed:16055732, PubMed:16959779, PubMed:8846782, PubMed:8943012).</text>
</comment>
<comment type="catalytic activity">
    <reaction evidence="25">
        <text>L-seryl-[protein] + ATP = O-phospho-L-seryl-[protein] + ADP + H(+)</text>
        <dbReference type="Rhea" id="RHEA:17989"/>
        <dbReference type="Rhea" id="RHEA-COMP:9863"/>
        <dbReference type="Rhea" id="RHEA-COMP:11604"/>
        <dbReference type="ChEBI" id="CHEBI:15378"/>
        <dbReference type="ChEBI" id="CHEBI:29999"/>
        <dbReference type="ChEBI" id="CHEBI:30616"/>
        <dbReference type="ChEBI" id="CHEBI:83421"/>
        <dbReference type="ChEBI" id="CHEBI:456216"/>
        <dbReference type="EC" id="2.7.11.1"/>
    </reaction>
</comment>
<comment type="catalytic activity">
    <reaction evidence="25">
        <text>L-threonyl-[protein] + ATP = O-phospho-L-threonyl-[protein] + ADP + H(+)</text>
        <dbReference type="Rhea" id="RHEA:46608"/>
        <dbReference type="Rhea" id="RHEA-COMP:11060"/>
        <dbReference type="Rhea" id="RHEA-COMP:11605"/>
        <dbReference type="ChEBI" id="CHEBI:15378"/>
        <dbReference type="ChEBI" id="CHEBI:30013"/>
        <dbReference type="ChEBI" id="CHEBI:30616"/>
        <dbReference type="ChEBI" id="CHEBI:61977"/>
        <dbReference type="ChEBI" id="CHEBI:456216"/>
        <dbReference type="EC" id="2.7.11.1"/>
    </reaction>
</comment>
<comment type="catalytic activity">
    <reaction evidence="25">
        <text>a 1,2-diacyl-sn-glycero-3-phospho-(1D-myo-inositol) + ATP = a 1,2-diacyl-sn-glycero-3-phospho-(1D-myo-inositol 4-phosphate) + ADP + H(+)</text>
        <dbReference type="Rhea" id="RHEA:19877"/>
        <dbReference type="ChEBI" id="CHEBI:15378"/>
        <dbReference type="ChEBI" id="CHEBI:30616"/>
        <dbReference type="ChEBI" id="CHEBI:57880"/>
        <dbReference type="ChEBI" id="CHEBI:58178"/>
        <dbReference type="ChEBI" id="CHEBI:456216"/>
        <dbReference type="EC" id="2.7.1.67"/>
    </reaction>
</comment>
<comment type="subunit">
    <text evidence="10 11 15 16 18 21 22">The target of rapamycin complex 1 (TORC1) is composed of at least KOG1, LST8, TCO89 and either TOR1 (TORC1-A) or TOR2 (TORC1-B) (PubMed:12408816, PubMed:12631735). TORC1 binds to and is inhibited by FKBP-rapamycin (PubMed:12408816). Interacts with PIB2; following activation of PIB2 by glutamine (PubMed:29698392). The target of rapamycin complex 2 (TORC2) is composed of at least AVO1, AVO2, BIT61, LST8, TOR2 and TSC11 (PubMed:12408816, PubMed:12631735, PubMed:16002396, PubMed:16959779, PubMed:29170376). TORC2 forms a homodimer (PubMed:16002396). Contrary to TORC1, TORC2 does not bind to and is not sensitive to FKBP-rapamycin (PubMed:12408816, PubMed:29170376). Interacts with SLM1 and SLM2 (PubMed:15689497, PubMed:16959779).</text>
</comment>
<comment type="interaction">
    <interactant intactId="EBI-19385">
        <id>P32600</id>
    </interactant>
    <interactant intactId="EBI-29284">
        <id>Q08236</id>
        <label>AVO1</label>
    </interactant>
    <organismsDiffer>false</organismsDiffer>
    <experiments>4</experiments>
</comment>
<comment type="interaction">
    <interactant intactId="EBI-19385">
        <id>P32600</id>
    </interactant>
    <interactant intactId="EBI-28131">
        <id>Q04749</id>
        <label>AVO2</label>
    </interactant>
    <organismsDiffer>false</organismsDiffer>
    <experiments>4</experiments>
</comment>
<comment type="interaction">
    <interactant intactId="EBI-19385">
        <id>P32600</id>
    </interactant>
    <interactant intactId="EBI-25889">
        <id>P47041</id>
        <label>BIT61</label>
    </interactant>
    <organismsDiffer>false</organismsDiffer>
    <experiments>3</experiments>
</comment>
<comment type="interaction">
    <interactant intactId="EBI-19385">
        <id>P32600</id>
    </interactant>
    <interactant intactId="EBI-6961">
        <id>P20081</id>
        <label>FPR1</label>
    </interactant>
    <organismsDiffer>false</organismsDiffer>
    <experiments>3</experiments>
</comment>
<comment type="interaction">
    <interactant intactId="EBI-19385">
        <id>P32600</id>
    </interactant>
    <interactant intactId="EBI-28598">
        <id>P41318</id>
        <label>LST8</label>
    </interactant>
    <organismsDiffer>false</organismsDiffer>
    <experiments>7</experiments>
</comment>
<comment type="interaction">
    <interactant intactId="EBI-19385">
        <id>P32600</id>
    </interactant>
    <interactant intactId="EBI-18926">
        <id>Q04372</id>
        <label>TAP42</label>
    </interactant>
    <organismsDiffer>false</organismsDiffer>
    <experiments>4</experiments>
</comment>
<comment type="interaction">
    <interactant intactId="EBI-19385">
        <id>P32600</id>
    </interactant>
    <interactant intactId="EBI-22621">
        <id>P40061</id>
        <label>TSC11</label>
    </interactant>
    <organismsDiffer>false</organismsDiffer>
    <experiments>5</experiments>
</comment>
<comment type="subcellular location">
    <subcellularLocation>
        <location evidence="8 11">Cell membrane</location>
        <topology evidence="8 11">Peripheral membrane protein</topology>
        <orientation evidence="8 11">Cytoplasmic side</orientation>
    </subcellularLocation>
    <subcellularLocation>
        <location evidence="11 25">Vacuole membrane</location>
        <topology evidence="11 25">Peripheral membrane protein</topology>
        <orientation evidence="11 25">Cytoplasmic side</orientation>
    </subcellularLocation>
    <text evidence="8">Also localizes to membranous structures both proximal to, yet distinct from, the plasma membrane as well as within the cell interior, probably endosomal or Golgi membranes.</text>
</comment>
<comment type="similarity">
    <text evidence="29">Belongs to the PI3/PI4-kinase family.</text>
</comment>
<dbReference type="EC" id="2.7.1.67"/>
<dbReference type="EC" id="2.7.11.1"/>
<dbReference type="EMBL" id="X71416">
    <property type="protein sequence ID" value="CAA50548.1"/>
    <property type="molecule type" value="Genomic_DNA"/>
</dbReference>
<dbReference type="EMBL" id="Z28203">
    <property type="protein sequence ID" value="CAA82048.1"/>
    <property type="molecule type" value="Genomic_DNA"/>
</dbReference>
<dbReference type="EMBL" id="BK006944">
    <property type="protein sequence ID" value="DAA08966.1"/>
    <property type="molecule type" value="Genomic_DNA"/>
</dbReference>
<dbReference type="PIR" id="S38040">
    <property type="entry name" value="S38040"/>
</dbReference>
<dbReference type="RefSeq" id="NP_012719.2">
    <property type="nucleotide sequence ID" value="NM_001179768.1"/>
</dbReference>
<dbReference type="PDB" id="6EMK">
    <property type="method" value="EM"/>
    <property type="resolution" value="8.00 A"/>
    <property type="chains" value="A/C=1-2474"/>
</dbReference>
<dbReference type="PDB" id="7PQH">
    <property type="method" value="EM"/>
    <property type="resolution" value="3.87 A"/>
    <property type="chains" value="E/F/H/K=1-2474"/>
</dbReference>
<dbReference type="PDBsum" id="6EMK"/>
<dbReference type="PDBsum" id="7PQH"/>
<dbReference type="EMDB" id="EMD-13594"/>
<dbReference type="EMDB" id="EMD-3896"/>
<dbReference type="SMR" id="P32600"/>
<dbReference type="BioGRID" id="33920">
    <property type="interactions" value="501"/>
</dbReference>
<dbReference type="ComplexPortal" id="CPX-1716">
    <property type="entry name" value="TORC1 serine/threonine-protein kinase complex, TOR2 variant"/>
</dbReference>
<dbReference type="ComplexPortal" id="CPX-1717">
    <property type="entry name" value="TORC2 complex"/>
</dbReference>
<dbReference type="DIP" id="DIP-2332N"/>
<dbReference type="FunCoup" id="P32600">
    <property type="interactions" value="1204"/>
</dbReference>
<dbReference type="IntAct" id="P32600">
    <property type="interactions" value="26"/>
</dbReference>
<dbReference type="MINT" id="P32600"/>
<dbReference type="STRING" id="4932.YKL203C"/>
<dbReference type="iPTMnet" id="P32600"/>
<dbReference type="PaxDb" id="4932-YKL203C"/>
<dbReference type="PeptideAtlas" id="P32600"/>
<dbReference type="EnsemblFungi" id="YKL203C_mRNA">
    <property type="protein sequence ID" value="YKL203C"/>
    <property type="gene ID" value="YKL203C"/>
</dbReference>
<dbReference type="GeneID" id="853632"/>
<dbReference type="KEGG" id="sce:YKL203C"/>
<dbReference type="AGR" id="SGD:S000001686"/>
<dbReference type="SGD" id="S000001686">
    <property type="gene designation" value="TOR2"/>
</dbReference>
<dbReference type="VEuPathDB" id="FungiDB:YKL203C"/>
<dbReference type="eggNOG" id="KOG0891">
    <property type="taxonomic scope" value="Eukaryota"/>
</dbReference>
<dbReference type="GeneTree" id="ENSGT00940000174195"/>
<dbReference type="HOGENOM" id="CLU_000178_7_1_1"/>
<dbReference type="InParanoid" id="P32600"/>
<dbReference type="OMA" id="MRQHSAK"/>
<dbReference type="OrthoDB" id="381190at2759"/>
<dbReference type="BioCyc" id="YEAST:G3O-31962-MONOMER"/>
<dbReference type="BRENDA" id="2.7.1.137">
    <property type="organism ID" value="984"/>
</dbReference>
<dbReference type="Reactome" id="R-SCE-1257604">
    <property type="pathway name" value="PIP3 activates AKT signaling"/>
</dbReference>
<dbReference type="Reactome" id="R-SCE-3371571">
    <property type="pathway name" value="HSF1-dependent transactivation"/>
</dbReference>
<dbReference type="Reactome" id="R-SCE-389357">
    <property type="pathway name" value="CD28 dependent PI3K/Akt signaling"/>
</dbReference>
<dbReference type="Reactome" id="R-SCE-5218920">
    <property type="pathway name" value="VEGFR2 mediated vascular permeability"/>
</dbReference>
<dbReference type="Reactome" id="R-SCE-6804757">
    <property type="pathway name" value="Regulation of TP53 Degradation"/>
</dbReference>
<dbReference type="Reactome" id="R-SCE-9639288">
    <property type="pathway name" value="Amino acids regulate mTORC1"/>
</dbReference>
<dbReference type="Reactome" id="R-SCE-9856530">
    <property type="pathway name" value="High laminar flow shear stress activates signaling by PIEZO1 and PECAM1:CDH5:KDR in endothelial cells"/>
</dbReference>
<dbReference type="BioGRID-ORCS" id="853632">
    <property type="hits" value="3 hits in 13 CRISPR screens"/>
</dbReference>
<dbReference type="PRO" id="PR:P32600"/>
<dbReference type="Proteomes" id="UP000002311">
    <property type="component" value="Chromosome XI"/>
</dbReference>
<dbReference type="RNAct" id="P32600">
    <property type="molecule type" value="protein"/>
</dbReference>
<dbReference type="GO" id="GO:0005737">
    <property type="term" value="C:cytoplasm"/>
    <property type="evidence" value="ECO:0000318"/>
    <property type="project" value="GO_Central"/>
</dbReference>
<dbReference type="GO" id="GO:0000329">
    <property type="term" value="C:fungal-type vacuole membrane"/>
    <property type="evidence" value="ECO:0000314"/>
    <property type="project" value="SGD"/>
</dbReference>
<dbReference type="GO" id="GO:0005739">
    <property type="term" value="C:mitochondrion"/>
    <property type="evidence" value="ECO:0007005"/>
    <property type="project" value="SGD"/>
</dbReference>
<dbReference type="GO" id="GO:0005634">
    <property type="term" value="C:nucleus"/>
    <property type="evidence" value="ECO:0000318"/>
    <property type="project" value="GO_Central"/>
</dbReference>
<dbReference type="GO" id="GO:0005886">
    <property type="term" value="C:plasma membrane"/>
    <property type="evidence" value="ECO:0000314"/>
    <property type="project" value="SGD"/>
</dbReference>
<dbReference type="GO" id="GO:0038201">
    <property type="term" value="C:TOR complex"/>
    <property type="evidence" value="ECO:0000318"/>
    <property type="project" value="GO_Central"/>
</dbReference>
<dbReference type="GO" id="GO:0031931">
    <property type="term" value="C:TORC1 complex"/>
    <property type="evidence" value="ECO:0000353"/>
    <property type="project" value="SGD"/>
</dbReference>
<dbReference type="GO" id="GO:0031932">
    <property type="term" value="C:TORC2 complex"/>
    <property type="evidence" value="ECO:0000314"/>
    <property type="project" value="UniProtKB"/>
</dbReference>
<dbReference type="GO" id="GO:0004430">
    <property type="term" value="F:1-phosphatidylinositol 4-kinase activity"/>
    <property type="evidence" value="ECO:0007669"/>
    <property type="project" value="UniProtKB-EC"/>
</dbReference>
<dbReference type="GO" id="GO:0005524">
    <property type="term" value="F:ATP binding"/>
    <property type="evidence" value="ECO:0007669"/>
    <property type="project" value="UniProtKB-KW"/>
</dbReference>
<dbReference type="GO" id="GO:0106310">
    <property type="term" value="F:protein serine kinase activity"/>
    <property type="evidence" value="ECO:0007669"/>
    <property type="project" value="RHEA"/>
</dbReference>
<dbReference type="GO" id="GO:0004674">
    <property type="term" value="F:protein serine/threonine kinase activity"/>
    <property type="evidence" value="ECO:0000314"/>
    <property type="project" value="SGD"/>
</dbReference>
<dbReference type="GO" id="GO:0044877">
    <property type="term" value="F:protein-containing complex binding"/>
    <property type="evidence" value="ECO:0007669"/>
    <property type="project" value="InterPro"/>
</dbReference>
<dbReference type="GO" id="GO:0006995">
    <property type="term" value="P:cellular response to nitrogen starvation"/>
    <property type="evidence" value="ECO:0000316"/>
    <property type="project" value="SGD"/>
</dbReference>
<dbReference type="GO" id="GO:0007010">
    <property type="term" value="P:cytoskeleton organization"/>
    <property type="evidence" value="ECO:0000315"/>
    <property type="project" value="SGD"/>
</dbReference>
<dbReference type="GO" id="GO:0030950">
    <property type="term" value="P:establishment or maintenance of actin cytoskeleton polarity"/>
    <property type="evidence" value="ECO:0000315"/>
    <property type="project" value="SGD"/>
</dbReference>
<dbReference type="GO" id="GO:0010507">
    <property type="term" value="P:negative regulation of autophagy"/>
    <property type="evidence" value="ECO:0000316"/>
    <property type="project" value="SGD"/>
</dbReference>
<dbReference type="GO" id="GO:0016242">
    <property type="term" value="P:negative regulation of macroautophagy"/>
    <property type="evidence" value="ECO:0000318"/>
    <property type="project" value="GO_Central"/>
</dbReference>
<dbReference type="GO" id="GO:0045807">
    <property type="term" value="P:positive regulation of endocytosis"/>
    <property type="evidence" value="ECO:0000315"/>
    <property type="project" value="SGD"/>
</dbReference>
<dbReference type="GO" id="GO:0035025">
    <property type="term" value="P:positive regulation of Rho protein signal transduction"/>
    <property type="evidence" value="ECO:0000315"/>
    <property type="project" value="SGD"/>
</dbReference>
<dbReference type="GO" id="GO:0051726">
    <property type="term" value="P:regulation of cell cycle"/>
    <property type="evidence" value="ECO:0000303"/>
    <property type="project" value="ComplexPortal"/>
</dbReference>
<dbReference type="GO" id="GO:0001558">
    <property type="term" value="P:regulation of cell growth"/>
    <property type="evidence" value="ECO:0000303"/>
    <property type="project" value="ComplexPortal"/>
</dbReference>
<dbReference type="GO" id="GO:1905356">
    <property type="term" value="P:regulation of snRNA pseudouridine synthesis"/>
    <property type="evidence" value="ECO:0000315"/>
    <property type="project" value="SGD"/>
</dbReference>
<dbReference type="GO" id="GO:0007584">
    <property type="term" value="P:response to nutrient"/>
    <property type="evidence" value="ECO:0000303"/>
    <property type="project" value="ComplexPortal"/>
</dbReference>
<dbReference type="GO" id="GO:0042254">
    <property type="term" value="P:ribosome biogenesis"/>
    <property type="evidence" value="ECO:0000315"/>
    <property type="project" value="SGD"/>
</dbReference>
<dbReference type="GO" id="GO:0031929">
    <property type="term" value="P:TOR signaling"/>
    <property type="evidence" value="ECO:0000315"/>
    <property type="project" value="SGD"/>
</dbReference>
<dbReference type="GO" id="GO:0038202">
    <property type="term" value="P:TORC1 signaling"/>
    <property type="evidence" value="ECO:0000318"/>
    <property type="project" value="GO_Central"/>
</dbReference>
<dbReference type="CDD" id="cd05169">
    <property type="entry name" value="PIKKc_TOR"/>
    <property type="match status" value="1"/>
</dbReference>
<dbReference type="FunFam" id="1.10.1070.11:FF:000020">
    <property type="entry name" value="Serine/threonine-protein kinase TOR"/>
    <property type="match status" value="1"/>
</dbReference>
<dbReference type="FunFam" id="1.20.120.150:FF:000001">
    <property type="entry name" value="Serine/threonine-protein kinase TOR"/>
    <property type="match status" value="1"/>
</dbReference>
<dbReference type="FunFam" id="1.25.10.10:FF:000371">
    <property type="entry name" value="Serine/threonine-protein kinase TOR"/>
    <property type="match status" value="1"/>
</dbReference>
<dbReference type="FunFam" id="1.25.10.10:FF:000601">
    <property type="entry name" value="Serine/threonine-protein kinase TOR"/>
    <property type="match status" value="1"/>
</dbReference>
<dbReference type="FunFam" id="1.25.10.10:FF:000681">
    <property type="entry name" value="Serine/threonine-protein kinase TOR"/>
    <property type="match status" value="1"/>
</dbReference>
<dbReference type="FunFam" id="3.30.1010.10:FF:000006">
    <property type="entry name" value="Serine/threonine-protein kinase TOR"/>
    <property type="match status" value="1"/>
</dbReference>
<dbReference type="Gene3D" id="1.20.120.150">
    <property type="entry name" value="FKBP12-rapamycin binding domain"/>
    <property type="match status" value="1"/>
</dbReference>
<dbReference type="Gene3D" id="1.25.10.10">
    <property type="entry name" value="Leucine-rich Repeat Variant"/>
    <property type="match status" value="3"/>
</dbReference>
<dbReference type="Gene3D" id="1.10.1070.11">
    <property type="entry name" value="Phosphatidylinositol 3-/4-kinase, catalytic domain"/>
    <property type="match status" value="1"/>
</dbReference>
<dbReference type="Gene3D" id="3.30.1010.10">
    <property type="entry name" value="Phosphatidylinositol 3-kinase Catalytic Subunit, Chain A, domain 4"/>
    <property type="match status" value="1"/>
</dbReference>
<dbReference type="Gene3D" id="1.25.40.10">
    <property type="entry name" value="Tetratricopeptide repeat domain"/>
    <property type="match status" value="1"/>
</dbReference>
<dbReference type="InterPro" id="IPR011989">
    <property type="entry name" value="ARM-like"/>
</dbReference>
<dbReference type="InterPro" id="IPR016024">
    <property type="entry name" value="ARM-type_fold"/>
</dbReference>
<dbReference type="InterPro" id="IPR050517">
    <property type="entry name" value="DDR_Repair_Kinase"/>
</dbReference>
<dbReference type="InterPro" id="IPR003152">
    <property type="entry name" value="FATC_dom"/>
</dbReference>
<dbReference type="InterPro" id="IPR009076">
    <property type="entry name" value="FRB_dom"/>
</dbReference>
<dbReference type="InterPro" id="IPR036738">
    <property type="entry name" value="FRB_sf"/>
</dbReference>
<dbReference type="InterPro" id="IPR011009">
    <property type="entry name" value="Kinase-like_dom_sf"/>
</dbReference>
<dbReference type="InterPro" id="IPR024585">
    <property type="entry name" value="mTOR_dom"/>
</dbReference>
<dbReference type="InterPro" id="IPR000403">
    <property type="entry name" value="PI3/4_kinase_cat_dom"/>
</dbReference>
<dbReference type="InterPro" id="IPR036940">
    <property type="entry name" value="PI3/4_kinase_cat_sf"/>
</dbReference>
<dbReference type="InterPro" id="IPR018936">
    <property type="entry name" value="PI3/4_kinase_CS"/>
</dbReference>
<dbReference type="InterPro" id="IPR003151">
    <property type="entry name" value="PIK-rel_kinase_FAT"/>
</dbReference>
<dbReference type="InterPro" id="IPR014009">
    <property type="entry name" value="PIK_FAT"/>
</dbReference>
<dbReference type="InterPro" id="IPR026683">
    <property type="entry name" value="TOR_cat"/>
</dbReference>
<dbReference type="InterPro" id="IPR011990">
    <property type="entry name" value="TPR-like_helical_dom_sf"/>
</dbReference>
<dbReference type="PANTHER" id="PTHR11139">
    <property type="entry name" value="ATAXIA TELANGIECTASIA MUTATED ATM -RELATED"/>
    <property type="match status" value="1"/>
</dbReference>
<dbReference type="PANTHER" id="PTHR11139:SF9">
    <property type="entry name" value="SERINE_THREONINE-PROTEIN KINASE MTOR"/>
    <property type="match status" value="1"/>
</dbReference>
<dbReference type="Pfam" id="PF02259">
    <property type="entry name" value="FAT"/>
    <property type="match status" value="1"/>
</dbReference>
<dbReference type="Pfam" id="PF02260">
    <property type="entry name" value="FATC"/>
    <property type="match status" value="1"/>
</dbReference>
<dbReference type="Pfam" id="PF08771">
    <property type="entry name" value="FRB_dom"/>
    <property type="match status" value="1"/>
</dbReference>
<dbReference type="Pfam" id="PF23593">
    <property type="entry name" value="HEAT_ATR"/>
    <property type="match status" value="1"/>
</dbReference>
<dbReference type="Pfam" id="PF11865">
    <property type="entry name" value="mTOR_dom"/>
    <property type="match status" value="1"/>
</dbReference>
<dbReference type="Pfam" id="PF00454">
    <property type="entry name" value="PI3_PI4_kinase"/>
    <property type="match status" value="1"/>
</dbReference>
<dbReference type="SMART" id="SM01346">
    <property type="entry name" value="DUF3385"/>
    <property type="match status" value="1"/>
</dbReference>
<dbReference type="SMART" id="SM01343">
    <property type="entry name" value="FATC"/>
    <property type="match status" value="1"/>
</dbReference>
<dbReference type="SMART" id="SM00146">
    <property type="entry name" value="PI3Kc"/>
    <property type="match status" value="1"/>
</dbReference>
<dbReference type="SMART" id="SM01345">
    <property type="entry name" value="Rapamycin_bind"/>
    <property type="match status" value="1"/>
</dbReference>
<dbReference type="SUPFAM" id="SSF48371">
    <property type="entry name" value="ARM repeat"/>
    <property type="match status" value="3"/>
</dbReference>
<dbReference type="SUPFAM" id="SSF47212">
    <property type="entry name" value="FKBP12-rapamycin-binding domain of FKBP-rapamycin-associated protein (FRAP)"/>
    <property type="match status" value="1"/>
</dbReference>
<dbReference type="SUPFAM" id="SSF56112">
    <property type="entry name" value="Protein kinase-like (PK-like)"/>
    <property type="match status" value="1"/>
</dbReference>
<dbReference type="PROSITE" id="PS51189">
    <property type="entry name" value="FAT"/>
    <property type="match status" value="1"/>
</dbReference>
<dbReference type="PROSITE" id="PS51190">
    <property type="entry name" value="FATC"/>
    <property type="match status" value="1"/>
</dbReference>
<dbReference type="PROSITE" id="PS00915">
    <property type="entry name" value="PI3_4_KINASE_1"/>
    <property type="match status" value="1"/>
</dbReference>
<dbReference type="PROSITE" id="PS00916">
    <property type="entry name" value="PI3_4_KINASE_2"/>
    <property type="match status" value="1"/>
</dbReference>
<dbReference type="PROSITE" id="PS50290">
    <property type="entry name" value="PI3_4_KINASE_3"/>
    <property type="match status" value="1"/>
</dbReference>
<proteinExistence type="evidence at protein level"/>
<gene>
    <name type="primary">TOR2</name>
    <name type="synonym">DRR2</name>
    <name type="synonym">TSC14</name>
    <name type="ordered locus">YKL203C</name>
</gene>
<sequence length="2474" mass="281568">MNKYINKYTTPPNLLSLRQRAEGKHRTRKKLTHKSHSHDDEMSTTSNTDSNHNGPNDSGRVITGSAGHIGKISFVDSELDTTFSTLNLIFDKLKSDVPQERASGANELSTTLTSLAREVSAEQFQRFSNSLNNKIFELIHGFTSSEKIGGILAVDTLISFYLSTEELPNQTSRLANYLRVLIPSSDIEVMRLAANTLGRLTVPGGTLTSDFVEFEVRTCIDWLTLTADNNSSSSKLEYRRHAALLIIKALADNSPYLLYPYVNSILDNIWVPLRDAKLIIRLDAAVALGKCLTIIQDRDPALGKQWFQRLFQGCTHGLSLNTNDSVHATLLVFRELLSLKAPYLRDKYDDIYKSTMKYKEYKFDVIRREVYAILPLLAAFDPAIFTKKYLDRIMVHYLRYLKNIDMNAANNSDKPFILVSIGDIAFEVGSSISPYMTLILDNIREGLRTKFKVRKQFEKDLFYCIGKLACALGPAFAKHLNKDLLNLMLNCPMSDHMQETLMILNEKIPSLESTVNSRILNLLSISLSGEKFIQSNQYDFNNQFSIEKARKSRNQSFMKKTGESNDDITDAQILIQCFKMLQLIHHQYSLTEFVRLITISYIEHEDSSVRKLAALTSCDLFIKDDICKQTSVHALHSVSEVLSKLLMIAITDPVAEIRLEILQHLGSNFDPQLAQPDNLRLLFMALNDEIFGIQLEAIKIIGRLSSVNPAYVVPSLRKTLLELLTQLKFSNMPKKKEESATLLCTLINSSDEVAKPYIDPILDVILPKCQDASSAVASTALKVLGELSVVGGKEMTRYLKELMPLIINTFQDQSNSFKRDAALTTLGQLAASSGYVVGPLLDYPELLGILINILKTENNPHIRRGTVRLIGILGALDPYKHREIEVTSNSKSSVEQNAPSIDIALLMQGVSPSNDEYYPTVVIHNLMKILNDPSLSIHHTAAIQAIMHIFQNLGLRCVSFLDQIIPGIILVMRSCPPSQLDFYFQQLGSLISIVKQHIRPHVEKIYGVIREFFPIIKLQITIISVIESISKALEGEFKRFVPETLTFFLDILENDQSNKRIVPIRILKSLVTFGPNLEDYSHLIMPIVVRMTEYSAGSLKKISIITLGRLAKNINLSEMSSRIVQALVRILNNGDRELTKATMNTLSLLLLQLGTDFVVFVPVINKALLRNRIQHSVYDQLVNKLLNNECLPTNIIFDKENEVPERKNYEDEMQVTKLPVNQNILKNAWYCSQQKTKEDWQEWIRRLSIQLLKESPSACLRSCSSLVSVYYPLARELFNASFSSCWVELQTSYQEDLIQALCKALSSSENPPEIYQMLLNLVEFMEHDDKPLPIPIHTLGKYAQKCHAFAKALHYKEVEFLEEPKNSTIEALISINNQLHQTDSAIGILKHAQQHNELQLKETWYEKLQRWEDALAAYNEKEAAGEDSVEVMMGKLRSLYALGEWEELSKLASEKWGTAKPEVKKAMAPLAAGAAWGLEQWDEIAQYTSVMKSQSPDKEFYDAILCLHRNNFKKAEVHIFNARDLLVTELSALVNESYNRAYNVVVRAQIIAELEEIIKYKKLPQNSDKRLTMRETWNTRLLGCQKNIDVWQRILRVRSLVIKPKEDAQVRIKFANLCRKSGRMALAKKVLNTLLEETDDPDHPNTAKASPPVVYAQLKYLWATGLQDEALKQLINFTSRMAHDLGLDPNNMIAQSVPQQSKRVPRHVEDYTKLLARCFLKQGEWRVCLQPKWRLSNPDSILGSYLLATHFDNTWYKAWHNWALANFEVISMLTSVSKKKQEGSDASSVTDINEFDNGMIGVNTFDAKEVHYSSNLIHRHVIPAIKGFFHSISLSESSSLQDALRLLTLWFTFGGIPEATQAMHEGFNLIQIGTWLEVLPQLISRIHQPNQIVSRSLLSLLSDLGKAHPQALVYPLMVAIKSESLSRQKAALSIIEKMRIHSPVLVDQAELVSHELIRMAVLWHEQWYEGLDDASRQFFGEHNTEKMFAALEPLYEMLKRGPETLREISFQNSFGRDLNDAYEWLMNYKKSKDVSNLNQAWDIYYNVFRKIGKQLPQLQTLELQHVSPKLLSAHDLELAVPGTRASGGKPIVKISKFEPVFSVISSKQRPRKFCIKGSDGKDYKYVLKGHEDIRQDSLVMQLFGLVNTLLQNDAECFRRHLDIQQYPAIPLSPKSGLLGWVPNSDTFHVLIREHREAKKIPLNIEHWVMLQMAPDYDNLTLLQKVEVFTYALNNTEGQDLYKVLWLKSRSSETWLERRTTYTRSLAVMSMTGYILGLGDRHPSNLMLDRITGKVIHIDFGDCFEAAILREKFPEKVPFRLTRMLTYAMEVSGIEGSFRITCENVMKVLRDNKGSLMAILEAFAFDPLINWGFDLPTKKIEEETGIQLPVMNANELLSNGAITEEEVQRVENEHKNAIRNARAMLVLKRITDKLTGNDIRRFNDLDVPEQVDKLIQQATSVENLCQHYIGWCPFW</sequence>
<keyword id="KW-0002">3D-structure</keyword>
<keyword id="KW-0067">ATP-binding</keyword>
<keyword id="KW-0131">Cell cycle</keyword>
<keyword id="KW-1003">Cell membrane</keyword>
<keyword id="KW-0418">Kinase</keyword>
<keyword id="KW-0472">Membrane</keyword>
<keyword id="KW-0547">Nucleotide-binding</keyword>
<keyword id="KW-0597">Phosphoprotein</keyword>
<keyword id="KW-1185">Reference proteome</keyword>
<keyword id="KW-0677">Repeat</keyword>
<keyword id="KW-0723">Serine/threonine-protein kinase</keyword>
<keyword id="KW-0808">Transferase</keyword>
<keyword id="KW-0926">Vacuole</keyword>
<evidence type="ECO:0000255" key="1">
    <source>
        <dbReference type="PROSITE-ProRule" id="PRU00269"/>
    </source>
</evidence>
<evidence type="ECO:0000255" key="2">
    <source>
        <dbReference type="PROSITE-ProRule" id="PRU00534"/>
    </source>
</evidence>
<evidence type="ECO:0000255" key="3">
    <source>
        <dbReference type="PROSITE-ProRule" id="PRU00535"/>
    </source>
</evidence>
<evidence type="ECO:0000256" key="4">
    <source>
        <dbReference type="SAM" id="MobiDB-lite"/>
    </source>
</evidence>
<evidence type="ECO:0000269" key="5">
    <source>
    </source>
</evidence>
<evidence type="ECO:0000269" key="6">
    <source>
    </source>
</evidence>
<evidence type="ECO:0000269" key="7">
    <source>
    </source>
</evidence>
<evidence type="ECO:0000269" key="8">
    <source>
    </source>
</evidence>
<evidence type="ECO:0000269" key="9">
    <source>
    </source>
</evidence>
<evidence type="ECO:0000269" key="10">
    <source>
    </source>
</evidence>
<evidence type="ECO:0000269" key="11">
    <source>
    </source>
</evidence>
<evidence type="ECO:0000269" key="12">
    <source>
    </source>
</evidence>
<evidence type="ECO:0000269" key="13">
    <source>
    </source>
</evidence>
<evidence type="ECO:0000269" key="14">
    <source>
    </source>
</evidence>
<evidence type="ECO:0000269" key="15">
    <source>
    </source>
</evidence>
<evidence type="ECO:0000269" key="16">
    <source>
    </source>
</evidence>
<evidence type="ECO:0000269" key="17">
    <source>
    </source>
</evidence>
<evidence type="ECO:0000269" key="18">
    <source>
    </source>
</evidence>
<evidence type="ECO:0000269" key="19">
    <source>
    </source>
</evidence>
<evidence type="ECO:0000269" key="20">
    <source>
    </source>
</evidence>
<evidence type="ECO:0000269" key="21">
    <source>
    </source>
</evidence>
<evidence type="ECO:0000269" key="22">
    <source>
    </source>
</evidence>
<evidence type="ECO:0000269" key="23">
    <source>
    </source>
</evidence>
<evidence type="ECO:0000269" key="24">
    <source>
    </source>
</evidence>
<evidence type="ECO:0000269" key="25">
    <source>
    </source>
</evidence>
<evidence type="ECO:0000269" key="26">
    <source>
    </source>
</evidence>
<evidence type="ECO:0000269" key="27">
    <source>
    </source>
</evidence>
<evidence type="ECO:0000269" key="28">
    <source>
    </source>
</evidence>
<evidence type="ECO:0000305" key="29"/>
<evidence type="ECO:0007744" key="30">
    <source>
        <dbReference type="PDB" id="6EMK"/>
    </source>
</evidence>
<evidence type="ECO:0007744" key="31">
    <source>
    </source>
</evidence>
<reference key="1">
    <citation type="journal article" date="1993" name="Cell">
        <title>Target of rapamycin in yeast, TOR2, is an essential phosphatidylinositol kinase homolog required for G1 progression.</title>
        <authorList>
            <person name="Kunz J."/>
            <person name="Henriquez R."/>
            <person name="Schneider U."/>
            <person name="Deuter-Reinhard M."/>
            <person name="Movva N."/>
            <person name="Hall M.N."/>
        </authorList>
    </citation>
    <scope>NUCLEOTIDE SEQUENCE [GENOMIC DNA]</scope>
    <source>
        <strain>JK9-3D</strain>
    </source>
</reference>
<reference key="2">
    <citation type="journal article" date="1994" name="Nature">
        <title>Complete DNA sequence of yeast chromosome XI.</title>
        <authorList>
            <person name="Dujon B."/>
            <person name="Alexandraki D."/>
            <person name="Andre B."/>
            <person name="Ansorge W."/>
            <person name="Baladron V."/>
            <person name="Ballesta J.P.G."/>
            <person name="Banrevi A."/>
            <person name="Bolle P.-A."/>
            <person name="Bolotin-Fukuhara M."/>
            <person name="Bossier P."/>
            <person name="Bou G."/>
            <person name="Boyer J."/>
            <person name="Buitrago M.J."/>
            <person name="Cheret G."/>
            <person name="Colleaux L."/>
            <person name="Daignan-Fornier B."/>
            <person name="del Rey F."/>
            <person name="Dion C."/>
            <person name="Domdey H."/>
            <person name="Duesterhoeft A."/>
            <person name="Duesterhus S."/>
            <person name="Entian K.-D."/>
            <person name="Erfle H."/>
            <person name="Esteban P.F."/>
            <person name="Feldmann H."/>
            <person name="Fernandes L."/>
            <person name="Fobo G.M."/>
            <person name="Fritz C."/>
            <person name="Fukuhara H."/>
            <person name="Gabel C."/>
            <person name="Gaillon L."/>
            <person name="Garcia-Cantalejo J.M."/>
            <person name="Garcia-Ramirez J.J."/>
            <person name="Gent M.E."/>
            <person name="Ghazvini M."/>
            <person name="Goffeau A."/>
            <person name="Gonzalez A."/>
            <person name="Grothues D."/>
            <person name="Guerreiro P."/>
            <person name="Hegemann J.H."/>
            <person name="Hewitt N."/>
            <person name="Hilger F."/>
            <person name="Hollenberg C.P."/>
            <person name="Horaitis O."/>
            <person name="Indge K.J."/>
            <person name="Jacquier A."/>
            <person name="James C.M."/>
            <person name="Jauniaux J.-C."/>
            <person name="Jimenez A."/>
            <person name="Keuchel H."/>
            <person name="Kirchrath L."/>
            <person name="Kleine K."/>
            <person name="Koetter P."/>
            <person name="Legrain P."/>
            <person name="Liebl S."/>
            <person name="Louis E.J."/>
            <person name="Maia e Silva A."/>
            <person name="Marck C."/>
            <person name="Monnier A.-L."/>
            <person name="Moestl D."/>
            <person name="Mueller S."/>
            <person name="Obermaier B."/>
            <person name="Oliver S.G."/>
            <person name="Pallier C."/>
            <person name="Pascolo S."/>
            <person name="Pfeiffer F."/>
            <person name="Philippsen P."/>
            <person name="Planta R.J."/>
            <person name="Pohl F.M."/>
            <person name="Pohl T.M."/>
            <person name="Poehlmann R."/>
            <person name="Portetelle D."/>
            <person name="Purnelle B."/>
            <person name="Puzos V."/>
            <person name="Ramezani Rad M."/>
            <person name="Rasmussen S.W."/>
            <person name="Remacha M.A."/>
            <person name="Revuelta J.L."/>
            <person name="Richard G.-F."/>
            <person name="Rieger M."/>
            <person name="Rodrigues-Pousada C."/>
            <person name="Rose M."/>
            <person name="Rupp T."/>
            <person name="Santos M.A."/>
            <person name="Schwager C."/>
            <person name="Sensen C."/>
            <person name="Skala J."/>
            <person name="Soares H."/>
            <person name="Sor F."/>
            <person name="Stegemann J."/>
            <person name="Tettelin H."/>
            <person name="Thierry A."/>
            <person name="Tzermia M."/>
            <person name="Urrestarazu L.A."/>
            <person name="van Dyck L."/>
            <person name="van Vliet-Reedijk J.C."/>
            <person name="Valens M."/>
            <person name="Vandenbol M."/>
            <person name="Vilela C."/>
            <person name="Vissers S."/>
            <person name="von Wettstein D."/>
            <person name="Voss H."/>
            <person name="Wiemann S."/>
            <person name="Xu G."/>
            <person name="Zimmermann J."/>
            <person name="Haasemann M."/>
            <person name="Becker I."/>
            <person name="Mewes H.-W."/>
        </authorList>
    </citation>
    <scope>NUCLEOTIDE SEQUENCE [LARGE SCALE GENOMIC DNA]</scope>
    <source>
        <strain>ATCC 204508 / S288c</strain>
    </source>
</reference>
<reference key="3">
    <citation type="journal article" date="2014" name="G3 (Bethesda)">
        <title>The reference genome sequence of Saccharomyces cerevisiae: Then and now.</title>
        <authorList>
            <person name="Engel S.R."/>
            <person name="Dietrich F.S."/>
            <person name="Fisk D.G."/>
            <person name="Binkley G."/>
            <person name="Balakrishnan R."/>
            <person name="Costanzo M.C."/>
            <person name="Dwight S.S."/>
            <person name="Hitz B.C."/>
            <person name="Karra K."/>
            <person name="Nash R.S."/>
            <person name="Weng S."/>
            <person name="Wong E.D."/>
            <person name="Lloyd P."/>
            <person name="Skrzypek M.S."/>
            <person name="Miyasato S.R."/>
            <person name="Simison M."/>
            <person name="Cherry J.M."/>
        </authorList>
    </citation>
    <scope>GENOME REANNOTATION</scope>
    <source>
        <strain>ATCC 204508 / S288c</strain>
    </source>
</reference>
<reference key="4">
    <citation type="journal article" date="1995" name="Cell">
        <title>TOR kinase domains are required for two distinct functions, only one of which is inhibited by rapamycin.</title>
        <authorList>
            <person name="Zheng X.-F."/>
            <person name="Florentino D."/>
            <person name="Chen J."/>
            <person name="Crabtree G.R."/>
            <person name="Schreiber S.L."/>
        </authorList>
    </citation>
    <scope>FUNCTION</scope>
</reference>
<reference key="5">
    <citation type="journal article" date="1995" name="EMBO J.">
        <title>FKBP12-rapamycin target TOR2 is a vacuolar protein with an associated phosphatidylinositol-4 kinase activity.</title>
        <authorList>
            <person name="Cardenas M.E."/>
            <person name="Heitman J."/>
        </authorList>
    </citation>
    <scope>FUNCTION</scope>
    <scope>SUBCELLULAR LOCATION</scope>
    <scope>MUTAGENESIS OF SER-1975 AND ASP-2279</scope>
    <scope>CATALYTIC ACTIVITY</scope>
</reference>
<reference key="6">
    <citation type="journal article" date="1996" name="Mol. Biol. Cell">
        <title>TOR controls translation initiation and early G1 progression in yeast.</title>
        <authorList>
            <person name="Barbet N.C."/>
            <person name="Schneider U."/>
            <person name="Helliwell S.B."/>
            <person name="Stansfield I."/>
            <person name="Tuite M.F."/>
            <person name="Hall M.N."/>
        </authorList>
    </citation>
    <scope>FUNCTION</scope>
</reference>
<reference key="7">
    <citation type="journal article" date="1996" name="Proc. Natl. Acad. Sci. U.S.A.">
        <title>TOR2 is required for organization of the actin cytoskeleton in yeast.</title>
        <authorList>
            <person name="Schmidt A."/>
            <person name="Kunz J."/>
            <person name="Hall M.N."/>
        </authorList>
    </citation>
    <scope>FUNCTION</scope>
</reference>
<reference key="8">
    <citation type="journal article" date="1998" name="EMBO J.">
        <title>The TOR nutrient signalling pathway phosphorylates NPR1 and inhibits turnover of the tryptophan permease.</title>
        <authorList>
            <person name="Schmidt A."/>
            <person name="Beck T."/>
            <person name="Koller A."/>
            <person name="Kunz J."/>
            <person name="Hall M.N."/>
        </authorList>
    </citation>
    <scope>FUNCTION</scope>
</reference>
<reference key="9">
    <citation type="journal article" date="1998" name="Proc. Natl. Acad. Sci. U.S.A.">
        <title>The TOR (target of rapamycin) signal transduction pathway regulates the stability of translation initiation factor eIF4G in the yeast Saccharomyces cerevisiae.</title>
        <authorList>
            <person name="Berset C."/>
            <person name="Trachsel H."/>
            <person name="Altmann M."/>
        </authorList>
    </citation>
    <scope>FUNCTION</scope>
</reference>
<reference key="10">
    <citation type="journal article" date="1999" name="EMBO J.">
        <title>Tor proteins and protein phosphatase 2A reciprocally regulate Tap42 in controlling cell growth in yeast.</title>
        <authorList>
            <person name="Jiang Y."/>
            <person name="Broach J.R."/>
        </authorList>
    </citation>
    <scope>FUNCTION</scope>
</reference>
<reference key="11">
    <citation type="journal article" date="1999" name="Mol. Biol. Cell">
        <title>Regulation of ribosome biogenesis by the rapamycin-sensitive TOR-signaling pathway in Saccharomyces cerevisiae.</title>
        <authorList>
            <person name="Powers T."/>
            <person name="Walter P."/>
        </authorList>
    </citation>
    <scope>FUNCTION</scope>
</reference>
<reference key="12">
    <citation type="journal article" date="1999" name="Nature">
        <title>The TOR signalling pathway controls nuclear localization of nutrient-regulated transcription factors.</title>
        <authorList>
            <person name="Beck T."/>
            <person name="Hall M.N."/>
        </authorList>
    </citation>
    <scope>FUNCTION</scope>
</reference>
<reference key="13">
    <citation type="journal article" date="2000" name="J. Biol. Chem.">
        <title>HEAT repeats mediate plasma membrane localization of Tor2p in yeast.</title>
        <authorList>
            <person name="Kunz J."/>
            <person name="Schneider U."/>
            <person name="Howald I."/>
            <person name="Schmidt A."/>
            <person name="Hall M.N."/>
        </authorList>
    </citation>
    <scope>SUBCELLULAR LOCATION</scope>
</reference>
<reference key="14">
    <citation type="journal article" date="2001" name="Mol. Cell">
        <title>TIP41 interacts with TAP42 and negatively regulates the TOR signaling pathway.</title>
        <authorList>
            <person name="Jacinto E."/>
            <person name="Guo B."/>
            <person name="Arndt K.T."/>
            <person name="Schmelzle T."/>
            <person name="Hall M.N."/>
        </authorList>
    </citation>
    <scope>FUNCTION</scope>
</reference>
<reference key="15">
    <citation type="journal article" date="2002" name="Mol. Cell">
        <title>Two TOR complexes, only one of which is rapamycin sensitive, have distinct roles in cell growth control.</title>
        <authorList>
            <person name="Loewith R."/>
            <person name="Jacinto E."/>
            <person name="Wullschleger S."/>
            <person name="Lorberg A."/>
            <person name="Crespo J.L."/>
            <person name="Bonenfant D."/>
            <person name="Oppliger W."/>
            <person name="Jenoe P."/>
            <person name="Hall M.N."/>
        </authorList>
    </citation>
    <scope>SUBUNIT</scope>
</reference>
<reference key="16">
    <citation type="journal article" date="2003" name="Mol. Biol. Cell">
        <title>Tor kinases are in distinct membrane-associated protein complexes in Saccharomyces cerevisiae.</title>
        <authorList>
            <person name="Wedaman K.P."/>
            <person name="Reinke A."/>
            <person name="Anderson S."/>
            <person name="Yates J.R. III"/>
            <person name="McCaffery J.M."/>
            <person name="Powers T."/>
        </authorList>
    </citation>
    <scope>SUBCELLULAR LOCATION</scope>
    <scope>SUBUNIT</scope>
    <scope>INTERACTION WITH LST8</scope>
</reference>
<reference key="17">
    <citation type="journal article" date="2003" name="Mol. Biol. Cell">
        <title>Receptor internalization in yeast requires the Tor2-Rho1 signaling pathway.</title>
        <authorList>
            <person name="deHart A.K.A."/>
            <person name="Schnell J.D."/>
            <person name="Allen D.A."/>
            <person name="Tsai J.-Y."/>
            <person name="Hicke L."/>
        </authorList>
    </citation>
    <scope>FUNCTION IN RECEPTOR ENDOCYTOSIS</scope>
    <scope>MUTAGENESIS OF GLY-2129</scope>
</reference>
<reference key="18">
    <citation type="journal article" date="2004" name="Cell">
        <title>TOR regulates ribosomal protein gene expression via PKA and the forkhead transcription factor FHL1.</title>
        <authorList>
            <person name="Martin D.E."/>
            <person name="Soulard A."/>
            <person name="Hall M.N."/>
        </authorList>
    </citation>
    <scope>FUNCTION</scope>
</reference>
<reference key="19">
    <citation type="journal article" date="2004" name="EMBO J.">
        <title>Genome-wide lethality screen identifies new PI4,5P2 effectors that regulate the actin cytoskeleton.</title>
        <authorList>
            <person name="Audhya A."/>
            <person name="Loewith R."/>
            <person name="Parsons A.B."/>
            <person name="Gao L."/>
            <person name="Tabuchi M."/>
            <person name="Zhou H."/>
            <person name="Boone C."/>
            <person name="Hall M.N."/>
            <person name="Emr S.D."/>
        </authorList>
    </citation>
    <scope>FUNCTION</scope>
    <scope>PHOSPHORYLATION OF SLM1-SLM2</scope>
</reference>
<reference key="20">
    <citation type="journal article" date="2005" name="J. Biol. Chem.">
        <title>Molecular organization of target of rapamycin complex 2.</title>
        <authorList>
            <person name="Wullschleger S."/>
            <person name="Loewith R."/>
            <person name="Oppliger W."/>
            <person name="Hall M.N."/>
        </authorList>
    </citation>
    <scope>SUBUNIT</scope>
    <scope>INTERACTION WITH LST8 AND TSC11</scope>
</reference>
<reference key="21">
    <citation type="journal article" date="2005" name="Mol. Biol. Cell">
        <title>The pleckstrin homology domain proteins Slm1 and Slm2 are required for actin cytoskeleton organization in yeast and bind phosphatidylinositol-4,5-bisphosphate and TORC2.</title>
        <authorList>
            <person name="Fadri M."/>
            <person name="Daquinag A."/>
            <person name="Wang S."/>
            <person name="Xue T."/>
            <person name="Kunz J."/>
        </authorList>
    </citation>
    <scope>INTERACTION WITH SLM1 AND SLM2</scope>
</reference>
<reference key="22">
    <citation type="journal article" date="2005" name="Mol. Cell. Biol.">
        <title>Tor2 directly phosphorylates the AGC kinase Ypk2 to regulate actin polarization.</title>
        <authorList>
            <person name="Kamada Y."/>
            <person name="Fujioka Y."/>
            <person name="Suzuki N.N."/>
            <person name="Inagaki F."/>
            <person name="Wullschleger S."/>
            <person name="Loewith R."/>
            <person name="Hall M.N."/>
            <person name="Ohsumi Y."/>
        </authorList>
    </citation>
    <scope>FUNCTION</scope>
    <scope>PHOSPHORYLATION OF YPK2</scope>
    <scope>MUTAGENESIS OF ASP-2298</scope>
</reference>
<reference key="23">
    <citation type="journal article" date="2006" name="J. Biol. Chem.">
        <title>Mutual antagonism of TOR and calcineurin signaling.</title>
        <authorList>
            <person name="Mulet J.M."/>
            <person name="Martin D.E."/>
            <person name="Loewith R."/>
            <person name="Hall M.N."/>
        </authorList>
    </citation>
    <scope>FUNCTION</scope>
    <scope>INTERACTION WITH SLM1</scope>
</reference>
<reference key="24">
    <citation type="journal article" date="2007" name="Mol. Cell">
        <title>Sch9 is a major target of TORC1 in Saccharomyces cerevisiae.</title>
        <authorList>
            <person name="Urban J."/>
            <person name="Soulard A."/>
            <person name="Huber A."/>
            <person name="Lippman S."/>
            <person name="Mukhopadhyay D."/>
            <person name="Deloche O."/>
            <person name="Wanke V."/>
            <person name="Anrather D."/>
            <person name="Ammerer G."/>
            <person name="Riezman H."/>
            <person name="Broach J.R."/>
            <person name="De Virgilio C."/>
            <person name="Hall M.N."/>
            <person name="Loewith R."/>
        </authorList>
    </citation>
    <scope>FUNCTION</scope>
</reference>
<reference key="25">
    <citation type="journal article" date="2008" name="Mol. Cell. Proteomics">
        <title>A multidimensional chromatography technology for in-depth phosphoproteome analysis.</title>
        <authorList>
            <person name="Albuquerque C.P."/>
            <person name="Smolka M.B."/>
            <person name="Payne S.H."/>
            <person name="Bafna V."/>
            <person name="Eng J."/>
            <person name="Zhou H."/>
        </authorList>
    </citation>
    <scope>IDENTIFICATION BY MASS SPECTROMETRY [LARGE SCALE ANALYSIS]</scope>
</reference>
<reference key="26">
    <citation type="journal article" date="2009" name="Science">
        <title>Global analysis of Cdk1 substrate phosphorylation sites provides insights into evolution.</title>
        <authorList>
            <person name="Holt L.J."/>
            <person name="Tuch B.B."/>
            <person name="Villen J."/>
            <person name="Johnson A.D."/>
            <person name="Gygi S.P."/>
            <person name="Morgan D.O."/>
        </authorList>
    </citation>
    <scope>PHOSPHORYLATION [LARGE SCALE ANALYSIS] AT THR-10</scope>
    <scope>IDENTIFICATION BY MASS SPECTROMETRY [LARGE SCALE ANALYSIS]</scope>
</reference>
<reference key="27">
    <citation type="journal article" date="2015" name="PLoS ONE">
        <title>TORC1 promotes phosphorylation of ribosomal protein S6 via the AGC kinase Ypk3 in Saccharomyces cerevisiae.</title>
        <authorList>
            <person name="Gonzalez A."/>
            <person name="Shimobayashi M."/>
            <person name="Eisenberg T."/>
            <person name="Merle D.A."/>
            <person name="Pendl T."/>
            <person name="Hall M.N."/>
            <person name="Moustafa T."/>
        </authorList>
    </citation>
    <scope>FUNCTION</scope>
</reference>
<reference key="28">
    <citation type="journal article" date="2018" name="PLoS Genet.">
        <title>Gtr/Ego-independent TORC1 activation is achieved through a glutamine-sensitive interaction with Pib2 on the vacuolar membrane.</title>
        <authorList>
            <person name="Ukai H."/>
            <person name="Araki Y."/>
            <person name="Kira S."/>
            <person name="Oikawa Y."/>
            <person name="May A.I."/>
            <person name="Noda T."/>
        </authorList>
    </citation>
    <scope>INTERACTION WITH PIB2</scope>
    <scope>IDENTIFICATION BY MASS SPECTROMETRY</scope>
</reference>
<reference evidence="30" key="29">
    <citation type="journal article" date="2017" name="Nat. Commun.">
        <title>Cryo-EM structure of Saccharomyces cerevisiae target of rapamycin complex 2.</title>
        <authorList>
            <person name="Karuppasamy M."/>
            <person name="Kusmider B."/>
            <person name="Oliveira T.M."/>
            <person name="Gaubitz C."/>
            <person name="Prouteau M."/>
            <person name="Loewith R."/>
            <person name="Schaffitzel C."/>
        </authorList>
    </citation>
    <scope>STRUCTURE BY ELECTRON MICROSCOPY (7.90 ANGSTROMS) OF THE TORC2 COMPLEX</scope>
    <scope>IDENTIFICATION IN THE TORC2 COMPLEX</scope>
</reference>
<name>TOR2_YEAST</name>
<accession>P32600</accession>
<accession>D6VX00</accession>